<gene>
    <name evidence="1" type="primary">clpX</name>
    <name type="ordered locus">RALTA_A1391</name>
</gene>
<evidence type="ECO:0000255" key="1">
    <source>
        <dbReference type="HAMAP-Rule" id="MF_00175"/>
    </source>
</evidence>
<evidence type="ECO:0000255" key="2">
    <source>
        <dbReference type="PROSITE-ProRule" id="PRU01250"/>
    </source>
</evidence>
<accession>B3R4W2</accession>
<dbReference type="EMBL" id="CU633749">
    <property type="protein sequence ID" value="CAQ69345.1"/>
    <property type="molecule type" value="Genomic_DNA"/>
</dbReference>
<dbReference type="RefSeq" id="WP_012352668.1">
    <property type="nucleotide sequence ID" value="NC_010528.1"/>
</dbReference>
<dbReference type="SMR" id="B3R4W2"/>
<dbReference type="GeneID" id="29761553"/>
<dbReference type="KEGG" id="cti:RALTA_A1391"/>
<dbReference type="eggNOG" id="COG1219">
    <property type="taxonomic scope" value="Bacteria"/>
</dbReference>
<dbReference type="HOGENOM" id="CLU_014218_8_2_4"/>
<dbReference type="BioCyc" id="CTAI977880:RALTA_RS06665-MONOMER"/>
<dbReference type="Proteomes" id="UP000001692">
    <property type="component" value="Chromosome 1"/>
</dbReference>
<dbReference type="GO" id="GO:0009376">
    <property type="term" value="C:HslUV protease complex"/>
    <property type="evidence" value="ECO:0007669"/>
    <property type="project" value="TreeGrafter"/>
</dbReference>
<dbReference type="GO" id="GO:0005524">
    <property type="term" value="F:ATP binding"/>
    <property type="evidence" value="ECO:0007669"/>
    <property type="project" value="UniProtKB-UniRule"/>
</dbReference>
<dbReference type="GO" id="GO:0016887">
    <property type="term" value="F:ATP hydrolysis activity"/>
    <property type="evidence" value="ECO:0007669"/>
    <property type="project" value="InterPro"/>
</dbReference>
<dbReference type="GO" id="GO:0140662">
    <property type="term" value="F:ATP-dependent protein folding chaperone"/>
    <property type="evidence" value="ECO:0007669"/>
    <property type="project" value="InterPro"/>
</dbReference>
<dbReference type="GO" id="GO:0046983">
    <property type="term" value="F:protein dimerization activity"/>
    <property type="evidence" value="ECO:0007669"/>
    <property type="project" value="InterPro"/>
</dbReference>
<dbReference type="GO" id="GO:0051082">
    <property type="term" value="F:unfolded protein binding"/>
    <property type="evidence" value="ECO:0007669"/>
    <property type="project" value="UniProtKB-UniRule"/>
</dbReference>
<dbReference type="GO" id="GO:0008270">
    <property type="term" value="F:zinc ion binding"/>
    <property type="evidence" value="ECO:0007669"/>
    <property type="project" value="InterPro"/>
</dbReference>
<dbReference type="GO" id="GO:0051301">
    <property type="term" value="P:cell division"/>
    <property type="evidence" value="ECO:0007669"/>
    <property type="project" value="TreeGrafter"/>
</dbReference>
<dbReference type="GO" id="GO:0051603">
    <property type="term" value="P:proteolysis involved in protein catabolic process"/>
    <property type="evidence" value="ECO:0007669"/>
    <property type="project" value="TreeGrafter"/>
</dbReference>
<dbReference type="CDD" id="cd19497">
    <property type="entry name" value="RecA-like_ClpX"/>
    <property type="match status" value="1"/>
</dbReference>
<dbReference type="FunFam" id="1.10.8.60:FF:000002">
    <property type="entry name" value="ATP-dependent Clp protease ATP-binding subunit ClpX"/>
    <property type="match status" value="1"/>
</dbReference>
<dbReference type="FunFam" id="3.40.50.300:FF:000005">
    <property type="entry name" value="ATP-dependent Clp protease ATP-binding subunit ClpX"/>
    <property type="match status" value="1"/>
</dbReference>
<dbReference type="Gene3D" id="1.10.8.60">
    <property type="match status" value="1"/>
</dbReference>
<dbReference type="Gene3D" id="6.20.220.10">
    <property type="entry name" value="ClpX chaperone, C4-type zinc finger domain"/>
    <property type="match status" value="1"/>
</dbReference>
<dbReference type="Gene3D" id="3.40.50.300">
    <property type="entry name" value="P-loop containing nucleotide triphosphate hydrolases"/>
    <property type="match status" value="1"/>
</dbReference>
<dbReference type="HAMAP" id="MF_00175">
    <property type="entry name" value="ClpX"/>
    <property type="match status" value="1"/>
</dbReference>
<dbReference type="InterPro" id="IPR003593">
    <property type="entry name" value="AAA+_ATPase"/>
</dbReference>
<dbReference type="InterPro" id="IPR050052">
    <property type="entry name" value="ATP-dep_Clp_protease_ClpX"/>
</dbReference>
<dbReference type="InterPro" id="IPR003959">
    <property type="entry name" value="ATPase_AAA_core"/>
</dbReference>
<dbReference type="InterPro" id="IPR019489">
    <property type="entry name" value="Clp_ATPase_C"/>
</dbReference>
<dbReference type="InterPro" id="IPR004487">
    <property type="entry name" value="Clp_protease_ATP-bd_su_ClpX"/>
</dbReference>
<dbReference type="InterPro" id="IPR046425">
    <property type="entry name" value="ClpX_bact"/>
</dbReference>
<dbReference type="InterPro" id="IPR027417">
    <property type="entry name" value="P-loop_NTPase"/>
</dbReference>
<dbReference type="InterPro" id="IPR010603">
    <property type="entry name" value="Znf_CppX_C4"/>
</dbReference>
<dbReference type="InterPro" id="IPR038366">
    <property type="entry name" value="Znf_CppX_C4_sf"/>
</dbReference>
<dbReference type="NCBIfam" id="TIGR00382">
    <property type="entry name" value="clpX"/>
    <property type="match status" value="1"/>
</dbReference>
<dbReference type="NCBIfam" id="NF003745">
    <property type="entry name" value="PRK05342.1"/>
    <property type="match status" value="1"/>
</dbReference>
<dbReference type="PANTHER" id="PTHR48102:SF7">
    <property type="entry name" value="ATP-DEPENDENT CLP PROTEASE ATP-BINDING SUBUNIT CLPX-LIKE, MITOCHONDRIAL"/>
    <property type="match status" value="1"/>
</dbReference>
<dbReference type="PANTHER" id="PTHR48102">
    <property type="entry name" value="ATP-DEPENDENT CLP PROTEASE ATP-BINDING SUBUNIT CLPX-LIKE, MITOCHONDRIAL-RELATED"/>
    <property type="match status" value="1"/>
</dbReference>
<dbReference type="Pfam" id="PF07724">
    <property type="entry name" value="AAA_2"/>
    <property type="match status" value="1"/>
</dbReference>
<dbReference type="Pfam" id="PF10431">
    <property type="entry name" value="ClpB_D2-small"/>
    <property type="match status" value="1"/>
</dbReference>
<dbReference type="Pfam" id="PF06689">
    <property type="entry name" value="zf-C4_ClpX"/>
    <property type="match status" value="1"/>
</dbReference>
<dbReference type="SMART" id="SM00382">
    <property type="entry name" value="AAA"/>
    <property type="match status" value="1"/>
</dbReference>
<dbReference type="SMART" id="SM01086">
    <property type="entry name" value="ClpB_D2-small"/>
    <property type="match status" value="1"/>
</dbReference>
<dbReference type="SMART" id="SM00994">
    <property type="entry name" value="zf-C4_ClpX"/>
    <property type="match status" value="1"/>
</dbReference>
<dbReference type="SUPFAM" id="SSF57716">
    <property type="entry name" value="Glucocorticoid receptor-like (DNA-binding domain)"/>
    <property type="match status" value="1"/>
</dbReference>
<dbReference type="SUPFAM" id="SSF52540">
    <property type="entry name" value="P-loop containing nucleoside triphosphate hydrolases"/>
    <property type="match status" value="1"/>
</dbReference>
<dbReference type="PROSITE" id="PS51902">
    <property type="entry name" value="CLPX_ZB"/>
    <property type="match status" value="1"/>
</dbReference>
<name>CLPX_CUPTR</name>
<reference key="1">
    <citation type="journal article" date="2008" name="Genome Res.">
        <title>Genome sequence of the beta-rhizobium Cupriavidus taiwanensis and comparative genomics of rhizobia.</title>
        <authorList>
            <person name="Amadou C."/>
            <person name="Pascal G."/>
            <person name="Mangenot S."/>
            <person name="Glew M."/>
            <person name="Bontemps C."/>
            <person name="Capela D."/>
            <person name="Carrere S."/>
            <person name="Cruveiller S."/>
            <person name="Dossat C."/>
            <person name="Lajus A."/>
            <person name="Marchetti M."/>
            <person name="Poinsot V."/>
            <person name="Rouy Z."/>
            <person name="Servin B."/>
            <person name="Saad M."/>
            <person name="Schenowitz C."/>
            <person name="Barbe V."/>
            <person name="Batut J."/>
            <person name="Medigue C."/>
            <person name="Masson-Boivin C."/>
        </authorList>
    </citation>
    <scope>NUCLEOTIDE SEQUENCE [LARGE SCALE GENOMIC DNA]</scope>
    <source>
        <strain>DSM 17343 / BCRC 17206 / CCUG 44338 / CIP 107171 / LMG 19424 / R1</strain>
    </source>
</reference>
<keyword id="KW-0067">ATP-binding</keyword>
<keyword id="KW-0143">Chaperone</keyword>
<keyword id="KW-0479">Metal-binding</keyword>
<keyword id="KW-0547">Nucleotide-binding</keyword>
<keyword id="KW-0862">Zinc</keyword>
<sequence length="425" mass="46624">MADKKGSSSEKLLYCSFCGKSQHEVKKLIAGPSVFICDECIDLCNEIIRDEATASEKDAAAAARSDLPTPHEIRESLDQYVIGQEQAKKILAVAVYNHYKRLKHLGKKDDVELSKSNILLIGPTGSGKTLLAQTLARLLNVPFVIADATTLTEAGYVGEDVENIIQKLLQNCNYEVEKAQRGIVYIDEIDKISRKSDNPSITRDVSGEGVQQALLKLIEGTMASVPPQGGRKHPNQDFLQVDTTNILFICGGAFDGLEKVIMQRSDKTGIGFAAQVKSKEERDVSEVLPQTEPEDLIKFGLIPELIGRLPVVATLAKLDEAALMQILVEPKNALVKQYQKLLAMEGVELEIRPGALSAIARKAIRRKTGARGLRSILEQSLMDVMYDLPNYKGVQKVVIDENTINGDAPPLLMYEEQQPKVAGSN</sequence>
<protein>
    <recommendedName>
        <fullName evidence="1">ATP-dependent Clp protease ATP-binding subunit ClpX</fullName>
    </recommendedName>
</protein>
<organism>
    <name type="scientific">Cupriavidus taiwanensis (strain DSM 17343 / BCRC 17206 / CCUG 44338 / CIP 107171 / LMG 19424 / R1)</name>
    <name type="common">Ralstonia taiwanensis (strain LMG 19424)</name>
    <dbReference type="NCBI Taxonomy" id="977880"/>
    <lineage>
        <taxon>Bacteria</taxon>
        <taxon>Pseudomonadati</taxon>
        <taxon>Pseudomonadota</taxon>
        <taxon>Betaproteobacteria</taxon>
        <taxon>Burkholderiales</taxon>
        <taxon>Burkholderiaceae</taxon>
        <taxon>Cupriavidus</taxon>
    </lineage>
</organism>
<comment type="function">
    <text evidence="1">ATP-dependent specificity component of the Clp protease. It directs the protease to specific substrates. Can perform chaperone functions in the absence of ClpP.</text>
</comment>
<comment type="subunit">
    <text evidence="1">Component of the ClpX-ClpP complex. Forms a hexameric ring that, in the presence of ATP, binds to fourteen ClpP subunits assembled into a disk-like structure with a central cavity, resembling the structure of eukaryotic proteasomes.</text>
</comment>
<comment type="similarity">
    <text evidence="1">Belongs to the ClpX chaperone family.</text>
</comment>
<proteinExistence type="inferred from homology"/>
<feature type="chain" id="PRO_1000097946" description="ATP-dependent Clp protease ATP-binding subunit ClpX">
    <location>
        <begin position="1"/>
        <end position="425"/>
    </location>
</feature>
<feature type="domain" description="ClpX-type ZB" evidence="2">
    <location>
        <begin position="3"/>
        <end position="56"/>
    </location>
</feature>
<feature type="binding site" evidence="2">
    <location>
        <position position="15"/>
    </location>
    <ligand>
        <name>Zn(2+)</name>
        <dbReference type="ChEBI" id="CHEBI:29105"/>
    </ligand>
</feature>
<feature type="binding site" evidence="2">
    <location>
        <position position="18"/>
    </location>
    <ligand>
        <name>Zn(2+)</name>
        <dbReference type="ChEBI" id="CHEBI:29105"/>
    </ligand>
</feature>
<feature type="binding site" evidence="2">
    <location>
        <position position="37"/>
    </location>
    <ligand>
        <name>Zn(2+)</name>
        <dbReference type="ChEBI" id="CHEBI:29105"/>
    </ligand>
</feature>
<feature type="binding site" evidence="2">
    <location>
        <position position="40"/>
    </location>
    <ligand>
        <name>Zn(2+)</name>
        <dbReference type="ChEBI" id="CHEBI:29105"/>
    </ligand>
</feature>
<feature type="binding site" evidence="1">
    <location>
        <begin position="123"/>
        <end position="130"/>
    </location>
    <ligand>
        <name>ATP</name>
        <dbReference type="ChEBI" id="CHEBI:30616"/>
    </ligand>
</feature>